<evidence type="ECO:0000250" key="1">
    <source>
        <dbReference type="UniProtKB" id="A0A0M3KKW3"/>
    </source>
</evidence>
<evidence type="ECO:0000250" key="2">
    <source>
        <dbReference type="UniProtKB" id="A2VBC4"/>
    </source>
</evidence>
<evidence type="ECO:0000250" key="3">
    <source>
        <dbReference type="UniProtKB" id="P0DMB4"/>
    </source>
</evidence>
<evidence type="ECO:0000250" key="4">
    <source>
        <dbReference type="UniProtKB" id="P0DMB7"/>
    </source>
</evidence>
<evidence type="ECO:0000255" key="5">
    <source>
        <dbReference type="PROSITE-ProRule" id="PRU10037"/>
    </source>
</evidence>
<evidence type="ECO:0000269" key="6">
    <source>
    </source>
</evidence>
<evidence type="ECO:0000303" key="7">
    <source>
    </source>
</evidence>
<evidence type="ECO:0000305" key="8"/>
<evidence type="ECO:0000305" key="9">
    <source>
    </source>
</evidence>
<feature type="chain" id="PRO_0000090378" description="Phospholipase A1" evidence="6">
    <location>
        <begin position="1"/>
        <end position="300"/>
    </location>
</feature>
<feature type="active site" description="Nucleophile" evidence="1">
    <location>
        <position position="137"/>
    </location>
</feature>
<feature type="active site" description="Charge relay system" evidence="5">
    <location>
        <position position="165"/>
    </location>
</feature>
<feature type="active site" description="Charge relay system" evidence="5">
    <location>
        <position position="229"/>
    </location>
</feature>
<feature type="disulfide bond" evidence="1">
    <location>
        <begin position="4"/>
        <end position="87"/>
    </location>
</feature>
<feature type="disulfide bond" evidence="1">
    <location>
        <begin position="176"/>
        <end position="181"/>
    </location>
</feature>
<feature type="disulfide bond" evidence="1">
    <location>
        <begin position="219"/>
        <end position="227"/>
    </location>
</feature>
<feature type="disulfide bond" evidence="1">
    <location>
        <begin position="244"/>
        <end position="268"/>
    </location>
</feature>
<feature type="disulfide bond" evidence="1">
    <location>
        <begin position="245"/>
        <end position="293"/>
    </location>
</feature>
<feature type="disulfide bond" evidence="1">
    <location>
        <begin position="261"/>
        <end position="266"/>
    </location>
</feature>
<feature type="sequence variant">
    <original>A</original>
    <variation>M</variation>
    <location>
        <position position="97"/>
    </location>
</feature>
<feature type="sequence variant">
    <original>I</original>
    <variation>P</variation>
    <location>
        <position position="191"/>
    </location>
</feature>
<feature type="sequence variant">
    <original>I</original>
    <variation>L</variation>
    <location>
        <position position="202"/>
    </location>
</feature>
<reference key="1">
    <citation type="journal article" date="1994" name="Int. Arch. Allergy Immunol.">
        <title>Allergens in hymenoptera venom. XXVI: the complete amino acid sequences of two vespid venom phospholipases.</title>
        <authorList>
            <person name="Hoffman D.R."/>
        </authorList>
    </citation>
    <scope>PROTEIN SEQUENCE</scope>
    <scope>SUBCELLULAR LOCATION</scope>
    <source>
        <tissue>Venom</tissue>
    </source>
</reference>
<accession>P51528</accession>
<dbReference type="EC" id="3.1.1.32" evidence="3"/>
<dbReference type="PIR" id="A44564">
    <property type="entry name" value="A44564"/>
</dbReference>
<dbReference type="SMR" id="P51528"/>
<dbReference type="Allergome" id="3514">
    <property type="allergen name" value="Ves m 1.0101"/>
</dbReference>
<dbReference type="Allergome" id="661">
    <property type="allergen name" value="Ves m 1"/>
</dbReference>
<dbReference type="ESTHER" id="vesmc-ppla1">
    <property type="family name" value="Insect_Phospholipase"/>
</dbReference>
<dbReference type="GO" id="GO:0005615">
    <property type="term" value="C:extracellular space"/>
    <property type="evidence" value="ECO:0007669"/>
    <property type="project" value="TreeGrafter"/>
</dbReference>
<dbReference type="GO" id="GO:0008970">
    <property type="term" value="F:phospholipase A1 activity"/>
    <property type="evidence" value="ECO:0007669"/>
    <property type="project" value="UniProtKB-EC"/>
</dbReference>
<dbReference type="GO" id="GO:0004623">
    <property type="term" value="F:phospholipase A2 activity"/>
    <property type="evidence" value="ECO:0007669"/>
    <property type="project" value="UniProtKB-EC"/>
</dbReference>
<dbReference type="GO" id="GO:0016042">
    <property type="term" value="P:lipid catabolic process"/>
    <property type="evidence" value="ECO:0007669"/>
    <property type="project" value="UniProtKB-KW"/>
</dbReference>
<dbReference type="CDD" id="cd00707">
    <property type="entry name" value="Pancreat_lipase_like"/>
    <property type="match status" value="1"/>
</dbReference>
<dbReference type="Gene3D" id="3.40.50.1820">
    <property type="entry name" value="alpha/beta hydrolase"/>
    <property type="match status" value="1"/>
</dbReference>
<dbReference type="InterPro" id="IPR029058">
    <property type="entry name" value="AB_hydrolase_fold"/>
</dbReference>
<dbReference type="InterPro" id="IPR002334">
    <property type="entry name" value="Allerg_PlipaseA1"/>
</dbReference>
<dbReference type="InterPro" id="IPR013818">
    <property type="entry name" value="Lipase"/>
</dbReference>
<dbReference type="InterPro" id="IPR033906">
    <property type="entry name" value="Lipase_N"/>
</dbReference>
<dbReference type="InterPro" id="IPR000734">
    <property type="entry name" value="TAG_lipase"/>
</dbReference>
<dbReference type="PANTHER" id="PTHR11610">
    <property type="entry name" value="LIPASE"/>
    <property type="match status" value="1"/>
</dbReference>
<dbReference type="Pfam" id="PF00151">
    <property type="entry name" value="Lipase"/>
    <property type="match status" value="1"/>
</dbReference>
<dbReference type="PRINTS" id="PR00825">
    <property type="entry name" value="DOLALLERGEN"/>
</dbReference>
<dbReference type="PRINTS" id="PR00821">
    <property type="entry name" value="TAGLIPASE"/>
</dbReference>
<dbReference type="SUPFAM" id="SSF53474">
    <property type="entry name" value="alpha/beta-Hydrolases"/>
    <property type="match status" value="1"/>
</dbReference>
<dbReference type="PROSITE" id="PS00120">
    <property type="entry name" value="LIPASE_SER"/>
    <property type="match status" value="1"/>
</dbReference>
<comment type="function">
    <text evidence="3 4">Catalyzes the hydrolysis of phosphatidylcholine with phospholipase A1 activity (By similarity). May act as an allergen and induce hemolytic activity (By similarity).</text>
</comment>
<comment type="catalytic activity">
    <reaction evidence="3">
        <text>a 1,2-diacyl-sn-glycero-3-phosphocholine + H2O = a 2-acyl-sn-glycero-3-phosphocholine + a fatty acid + H(+)</text>
        <dbReference type="Rhea" id="RHEA:18689"/>
        <dbReference type="ChEBI" id="CHEBI:15377"/>
        <dbReference type="ChEBI" id="CHEBI:15378"/>
        <dbReference type="ChEBI" id="CHEBI:28868"/>
        <dbReference type="ChEBI" id="CHEBI:57643"/>
        <dbReference type="ChEBI" id="CHEBI:57875"/>
        <dbReference type="EC" id="3.1.1.32"/>
    </reaction>
</comment>
<comment type="subcellular location">
    <subcellularLocation>
        <location evidence="6">Secreted</location>
    </subcellularLocation>
</comment>
<comment type="tissue specificity">
    <text evidence="9">Expressed by the venom gland.</text>
</comment>
<comment type="allergen">
    <text evidence="2">Causes an allergic reaction in human. Binds to IgE.</text>
</comment>
<comment type="similarity">
    <text evidence="8">Belongs to the AB hydrolase superfamily. Lipase family.</text>
</comment>
<organism>
    <name type="scientific">Vespula maculifrons</name>
    <name type="common">Eastern yellow jacket</name>
    <name type="synonym">Wasp</name>
    <dbReference type="NCBI Taxonomy" id="7453"/>
    <lineage>
        <taxon>Eukaryota</taxon>
        <taxon>Metazoa</taxon>
        <taxon>Ecdysozoa</taxon>
        <taxon>Arthropoda</taxon>
        <taxon>Hexapoda</taxon>
        <taxon>Insecta</taxon>
        <taxon>Pterygota</taxon>
        <taxon>Neoptera</taxon>
        <taxon>Endopterygota</taxon>
        <taxon>Hymenoptera</taxon>
        <taxon>Apocrita</taxon>
        <taxon>Aculeata</taxon>
        <taxon>Vespoidea</taxon>
        <taxon>Vespidae</taxon>
        <taxon>Vespinae</taxon>
        <taxon>Vespula</taxon>
    </lineage>
</organism>
<sequence length="300" mass="33540">GPKCPFNSDTVSIIIETRENRNRDLYTLQTLQNHPEFKKKTITRPVVFITHGFTSSASEKNFINLAKALVDKDNYMVISIDWQTAACTNEYPGLKYAYYPTAASNTRLVGQYIATITQKLVKDYKISMANIRLIGHSLGAHVSGFAGKRVQELKLGKYSEIIGLDPARPSFDSNHCSERLCETDAEYVQIIHTSNYLGTEKILGTVDFYMNNGKNNPGCGRFFSEVCSHTRAVIYMAECIKHECCLIGIPRSKSSQPISRCTKQECVCVGLNAKKYPSRGSFYVPVESTAPFCNNKGKII</sequence>
<proteinExistence type="evidence at protein level"/>
<name>PA1_VESMC</name>
<keyword id="KW-0020">Allergen</keyword>
<keyword id="KW-0903">Direct protein sequencing</keyword>
<keyword id="KW-1015">Disulfide bond</keyword>
<keyword id="KW-0378">Hydrolase</keyword>
<keyword id="KW-0442">Lipid degradation</keyword>
<keyword id="KW-0443">Lipid metabolism</keyword>
<keyword id="KW-0964">Secreted</keyword>
<protein>
    <recommendedName>
        <fullName evidence="9">Phospholipase A1</fullName>
        <shortName evidence="8">PLA1</shortName>
        <ecNumber evidence="3">3.1.1.32</ecNumber>
    </recommendedName>
    <alternativeName>
        <fullName>Allergen Ves m I</fullName>
    </alternativeName>
    <allergenName evidence="7">Ves m 1</allergenName>
</protein>